<accession>Q39KB9</accession>
<comment type="function">
    <text evidence="1">Part of the ABC transporter complex UgpBAEC involved in sn-glycerol-3-phosphate (G3P) import. Responsible for energy coupling to the transport system.</text>
</comment>
<comment type="catalytic activity">
    <reaction evidence="1">
        <text>sn-glycerol 3-phosphate(out) + ATP + H2O = sn-glycerol 3-phosphate(in) + ADP + phosphate + H(+)</text>
        <dbReference type="Rhea" id="RHEA:21668"/>
        <dbReference type="ChEBI" id="CHEBI:15377"/>
        <dbReference type="ChEBI" id="CHEBI:15378"/>
        <dbReference type="ChEBI" id="CHEBI:30616"/>
        <dbReference type="ChEBI" id="CHEBI:43474"/>
        <dbReference type="ChEBI" id="CHEBI:57597"/>
        <dbReference type="ChEBI" id="CHEBI:456216"/>
        <dbReference type="EC" id="7.6.2.10"/>
    </reaction>
</comment>
<comment type="subunit">
    <text evidence="1">The complex is composed of two ATP-binding proteins (UgpC), two transmembrane proteins (UgpA and UgpE) and a solute-binding protein (UgpB).</text>
</comment>
<comment type="subcellular location">
    <subcellularLocation>
        <location evidence="1">Cell inner membrane</location>
        <topology evidence="1">Peripheral membrane protein</topology>
    </subcellularLocation>
</comment>
<comment type="similarity">
    <text evidence="1">Belongs to the ABC transporter superfamily. sn-glycerol-3-phosphate importer (TC 3.A.1.1.3) family.</text>
</comment>
<keyword id="KW-0067">ATP-binding</keyword>
<keyword id="KW-0997">Cell inner membrane</keyword>
<keyword id="KW-1003">Cell membrane</keyword>
<keyword id="KW-0472">Membrane</keyword>
<keyword id="KW-0547">Nucleotide-binding</keyword>
<keyword id="KW-0762">Sugar transport</keyword>
<keyword id="KW-1278">Translocase</keyword>
<keyword id="KW-0813">Transport</keyword>
<evidence type="ECO:0000255" key="1">
    <source>
        <dbReference type="HAMAP-Rule" id="MF_01727"/>
    </source>
</evidence>
<name>UGPC_BURL3</name>
<dbReference type="EC" id="7.6.2.10" evidence="1"/>
<dbReference type="EMBL" id="CP000151">
    <property type="protein sequence ID" value="ABB07097.1"/>
    <property type="molecule type" value="Genomic_DNA"/>
</dbReference>
<dbReference type="RefSeq" id="WP_011350700.1">
    <property type="nucleotide sequence ID" value="NC_007510.1"/>
</dbReference>
<dbReference type="SMR" id="Q39KB9"/>
<dbReference type="GeneID" id="45093412"/>
<dbReference type="KEGG" id="bur:Bcep18194_A3495"/>
<dbReference type="PATRIC" id="fig|482957.22.peg.338"/>
<dbReference type="HOGENOM" id="CLU_000604_1_1_4"/>
<dbReference type="Proteomes" id="UP000002705">
    <property type="component" value="Chromosome 1"/>
</dbReference>
<dbReference type="GO" id="GO:0055052">
    <property type="term" value="C:ATP-binding cassette (ABC) transporter complex, substrate-binding subunit-containing"/>
    <property type="evidence" value="ECO:0007669"/>
    <property type="project" value="TreeGrafter"/>
</dbReference>
<dbReference type="GO" id="GO:0015430">
    <property type="term" value="F:ABC-type glycerol-3-phosphate transporter activity"/>
    <property type="evidence" value="ECO:0007669"/>
    <property type="project" value="UniProtKB-EC"/>
</dbReference>
<dbReference type="GO" id="GO:0005524">
    <property type="term" value="F:ATP binding"/>
    <property type="evidence" value="ECO:0007669"/>
    <property type="project" value="UniProtKB-KW"/>
</dbReference>
<dbReference type="GO" id="GO:0016887">
    <property type="term" value="F:ATP hydrolysis activity"/>
    <property type="evidence" value="ECO:0007669"/>
    <property type="project" value="InterPro"/>
</dbReference>
<dbReference type="GO" id="GO:0008643">
    <property type="term" value="P:carbohydrate transport"/>
    <property type="evidence" value="ECO:0007669"/>
    <property type="project" value="InterPro"/>
</dbReference>
<dbReference type="GO" id="GO:0001407">
    <property type="term" value="P:glycerophosphodiester transmembrane transport"/>
    <property type="evidence" value="ECO:0007669"/>
    <property type="project" value="TreeGrafter"/>
</dbReference>
<dbReference type="CDD" id="cd03301">
    <property type="entry name" value="ABC_MalK_N"/>
    <property type="match status" value="1"/>
</dbReference>
<dbReference type="FunFam" id="3.40.50.300:FF:000042">
    <property type="entry name" value="Maltose/maltodextrin ABC transporter, ATP-binding protein"/>
    <property type="match status" value="1"/>
</dbReference>
<dbReference type="Gene3D" id="2.40.50.100">
    <property type="match status" value="1"/>
</dbReference>
<dbReference type="Gene3D" id="2.40.50.140">
    <property type="entry name" value="Nucleic acid-binding proteins"/>
    <property type="match status" value="1"/>
</dbReference>
<dbReference type="Gene3D" id="3.40.50.300">
    <property type="entry name" value="P-loop containing nucleotide triphosphate hydrolases"/>
    <property type="match status" value="1"/>
</dbReference>
<dbReference type="InterPro" id="IPR003593">
    <property type="entry name" value="AAA+_ATPase"/>
</dbReference>
<dbReference type="InterPro" id="IPR003439">
    <property type="entry name" value="ABC_transporter-like_ATP-bd"/>
</dbReference>
<dbReference type="InterPro" id="IPR017871">
    <property type="entry name" value="ABC_transporter-like_CS"/>
</dbReference>
<dbReference type="InterPro" id="IPR015855">
    <property type="entry name" value="ABC_transpr_MalK-like"/>
</dbReference>
<dbReference type="InterPro" id="IPR047641">
    <property type="entry name" value="ABC_transpr_MalK/UgpC-like"/>
</dbReference>
<dbReference type="InterPro" id="IPR008995">
    <property type="entry name" value="Mo/tungstate-bd_C_term_dom"/>
</dbReference>
<dbReference type="InterPro" id="IPR012340">
    <property type="entry name" value="NA-bd_OB-fold"/>
</dbReference>
<dbReference type="InterPro" id="IPR040582">
    <property type="entry name" value="OB_MalK-like"/>
</dbReference>
<dbReference type="InterPro" id="IPR027417">
    <property type="entry name" value="P-loop_NTPase"/>
</dbReference>
<dbReference type="NCBIfam" id="NF008653">
    <property type="entry name" value="PRK11650.1"/>
    <property type="match status" value="1"/>
</dbReference>
<dbReference type="PANTHER" id="PTHR43875">
    <property type="entry name" value="MALTODEXTRIN IMPORT ATP-BINDING PROTEIN MSMX"/>
    <property type="match status" value="1"/>
</dbReference>
<dbReference type="PANTHER" id="PTHR43875:SF12">
    <property type="entry name" value="SN-GLYCEROL-3-PHOSPHATE IMPORT ATP-BINDING PROTEIN UGPC"/>
    <property type="match status" value="1"/>
</dbReference>
<dbReference type="Pfam" id="PF00005">
    <property type="entry name" value="ABC_tran"/>
    <property type="match status" value="1"/>
</dbReference>
<dbReference type="Pfam" id="PF17912">
    <property type="entry name" value="OB_MalK"/>
    <property type="match status" value="1"/>
</dbReference>
<dbReference type="SMART" id="SM00382">
    <property type="entry name" value="AAA"/>
    <property type="match status" value="1"/>
</dbReference>
<dbReference type="SUPFAM" id="SSF50331">
    <property type="entry name" value="MOP-like"/>
    <property type="match status" value="1"/>
</dbReference>
<dbReference type="SUPFAM" id="SSF52540">
    <property type="entry name" value="P-loop containing nucleoside triphosphate hydrolases"/>
    <property type="match status" value="1"/>
</dbReference>
<dbReference type="PROSITE" id="PS00211">
    <property type="entry name" value="ABC_TRANSPORTER_1"/>
    <property type="match status" value="1"/>
</dbReference>
<dbReference type="PROSITE" id="PS50893">
    <property type="entry name" value="ABC_TRANSPORTER_2"/>
    <property type="match status" value="1"/>
</dbReference>
<dbReference type="PROSITE" id="PS51315">
    <property type="entry name" value="UGPC"/>
    <property type="match status" value="1"/>
</dbReference>
<protein>
    <recommendedName>
        <fullName evidence="1">sn-glycerol-3-phosphate import ATP-binding protein UgpC</fullName>
        <ecNumber evidence="1">7.6.2.10</ecNumber>
    </recommendedName>
</protein>
<sequence length="361" mass="38755">MAALSLKGVRKSYDGKQHVLHGIDVEIADGEFIVLVGPSGCGKSTLLRMIAGLETVTDGEIAIGERVVNTLEPKDRDIAMVFQNYALYPHMTVAQNMGYGLKIRGIERTTIDSRVAAAAKILELEPLLARRPRELSGGQRQRVAMGRAIVREPSVFLFDEPLSNLDAKLRVQMRLEIQRLHARLATTSVYVTHDQIEAMTLAQRVIVMNRGYAEQIGAPVDVYEKPATVFVAGFIGSPAMNLMHGRLSDDGATFTVAGGGPALPVAGAPGIGAAIATGRDWVLGVRPEHMTPQPGVAQATLPVDSCELLGADNLAHGRWGNHDVAVRLPHADRPARGTALAAALPAHRLHFFDPETGKRAG</sequence>
<feature type="chain" id="PRO_0000289744" description="sn-glycerol-3-phosphate import ATP-binding protein UgpC">
    <location>
        <begin position="1"/>
        <end position="361"/>
    </location>
</feature>
<feature type="domain" description="ABC transporter" evidence="1">
    <location>
        <begin position="4"/>
        <end position="235"/>
    </location>
</feature>
<feature type="binding site" evidence="1">
    <location>
        <begin position="37"/>
        <end position="44"/>
    </location>
    <ligand>
        <name>ATP</name>
        <dbReference type="ChEBI" id="CHEBI:30616"/>
    </ligand>
</feature>
<gene>
    <name evidence="1" type="primary">ugpC</name>
    <name type="ordered locus">Bcep18194_A3495</name>
</gene>
<reference key="1">
    <citation type="submission" date="2005-10" db="EMBL/GenBank/DDBJ databases">
        <title>Complete sequence of chromosome 1 of Burkholderia sp. 383.</title>
        <authorList>
            <consortium name="US DOE Joint Genome Institute"/>
            <person name="Copeland A."/>
            <person name="Lucas S."/>
            <person name="Lapidus A."/>
            <person name="Barry K."/>
            <person name="Detter J.C."/>
            <person name="Glavina T."/>
            <person name="Hammon N."/>
            <person name="Israni S."/>
            <person name="Pitluck S."/>
            <person name="Chain P."/>
            <person name="Malfatti S."/>
            <person name="Shin M."/>
            <person name="Vergez L."/>
            <person name="Schmutz J."/>
            <person name="Larimer F."/>
            <person name="Land M."/>
            <person name="Kyrpides N."/>
            <person name="Lykidis A."/>
            <person name="Richardson P."/>
        </authorList>
    </citation>
    <scope>NUCLEOTIDE SEQUENCE [LARGE SCALE GENOMIC DNA]</scope>
    <source>
        <strain>ATCC 17760 / DSM 23089 / LMG 22485 / NCIMB 9086 / R18194 / 383</strain>
    </source>
</reference>
<proteinExistence type="inferred from homology"/>
<organism>
    <name type="scientific">Burkholderia lata (strain ATCC 17760 / DSM 23089 / LMG 22485 / NCIMB 9086 / R18194 / 383)</name>
    <dbReference type="NCBI Taxonomy" id="482957"/>
    <lineage>
        <taxon>Bacteria</taxon>
        <taxon>Pseudomonadati</taxon>
        <taxon>Pseudomonadota</taxon>
        <taxon>Betaproteobacteria</taxon>
        <taxon>Burkholderiales</taxon>
        <taxon>Burkholderiaceae</taxon>
        <taxon>Burkholderia</taxon>
        <taxon>Burkholderia cepacia complex</taxon>
    </lineage>
</organism>